<name>HOX11_ORYSI</name>
<gene>
    <name type="primary">HOX11</name>
    <name type="ORF">OsI_030534</name>
</gene>
<feature type="chain" id="PRO_0000331694" description="Homeobox-leucine zipper protein HOX11">
    <location>
        <begin position="1"/>
        <end position="276"/>
    </location>
</feature>
<feature type="DNA-binding region" description="Homeobox" evidence="2">
    <location>
        <begin position="87"/>
        <end position="146"/>
    </location>
</feature>
<feature type="region of interest" description="Disordered" evidence="3">
    <location>
        <begin position="1"/>
        <end position="92"/>
    </location>
</feature>
<feature type="region of interest" description="Leucine-zipper">
    <location>
        <begin position="145"/>
        <end position="189"/>
    </location>
</feature>
<feature type="region of interest" description="Disordered" evidence="3">
    <location>
        <begin position="214"/>
        <end position="244"/>
    </location>
</feature>
<feature type="compositionally biased region" description="Polar residues" evidence="3">
    <location>
        <begin position="39"/>
        <end position="48"/>
    </location>
</feature>
<feature type="compositionally biased region" description="Gly residues" evidence="3">
    <location>
        <begin position="58"/>
        <end position="73"/>
    </location>
</feature>
<keyword id="KW-0238">DNA-binding</keyword>
<keyword id="KW-0371">Homeobox</keyword>
<keyword id="KW-0539">Nucleus</keyword>
<keyword id="KW-1185">Reference proteome</keyword>
<keyword id="KW-0804">Transcription</keyword>
<keyword id="KW-0805">Transcription regulation</keyword>
<comment type="function">
    <text evidence="1">Probable transcription factor.</text>
</comment>
<comment type="subcellular location">
    <subcellularLocation>
        <location evidence="5">Nucleus</location>
    </subcellularLocation>
</comment>
<comment type="tissue specificity">
    <text evidence="4">Expressed in stems, leaf sheaths and blades and panicles.</text>
</comment>
<comment type="similarity">
    <text evidence="5">Belongs to the HD-ZIP homeobox family. Class II subfamily.</text>
</comment>
<evidence type="ECO:0000250" key="1"/>
<evidence type="ECO:0000255" key="2">
    <source>
        <dbReference type="PROSITE-ProRule" id="PRU00108"/>
    </source>
</evidence>
<evidence type="ECO:0000256" key="3">
    <source>
        <dbReference type="SAM" id="MobiDB-lite"/>
    </source>
</evidence>
<evidence type="ECO:0000269" key="4">
    <source>
    </source>
</evidence>
<evidence type="ECO:0000305" key="5"/>
<protein>
    <recommendedName>
        <fullName>Homeobox-leucine zipper protein HOX11</fullName>
    </recommendedName>
    <alternativeName>
        <fullName>HD-ZIP protein HOX11</fullName>
    </alternativeName>
    <alternativeName>
        <fullName>Homeodomain transcription factor HOX11</fullName>
    </alternativeName>
    <alternativeName>
        <fullName>OsHox11</fullName>
    </alternativeName>
</protein>
<accession>A2Z1U1</accession>
<accession>A5JPU7</accession>
<reference key="1">
    <citation type="journal article" date="2005" name="PLoS Biol.">
        <title>The genomes of Oryza sativa: a history of duplications.</title>
        <authorList>
            <person name="Yu J."/>
            <person name="Wang J."/>
            <person name="Lin W."/>
            <person name="Li S."/>
            <person name="Li H."/>
            <person name="Zhou J."/>
            <person name="Ni P."/>
            <person name="Dong W."/>
            <person name="Hu S."/>
            <person name="Zeng C."/>
            <person name="Zhang J."/>
            <person name="Zhang Y."/>
            <person name="Li R."/>
            <person name="Xu Z."/>
            <person name="Li S."/>
            <person name="Li X."/>
            <person name="Zheng H."/>
            <person name="Cong L."/>
            <person name="Lin L."/>
            <person name="Yin J."/>
            <person name="Geng J."/>
            <person name="Li G."/>
            <person name="Shi J."/>
            <person name="Liu J."/>
            <person name="Lv H."/>
            <person name="Li J."/>
            <person name="Wang J."/>
            <person name="Deng Y."/>
            <person name="Ran L."/>
            <person name="Shi X."/>
            <person name="Wang X."/>
            <person name="Wu Q."/>
            <person name="Li C."/>
            <person name="Ren X."/>
            <person name="Wang J."/>
            <person name="Wang X."/>
            <person name="Li D."/>
            <person name="Liu D."/>
            <person name="Zhang X."/>
            <person name="Ji Z."/>
            <person name="Zhao W."/>
            <person name="Sun Y."/>
            <person name="Zhang Z."/>
            <person name="Bao J."/>
            <person name="Han Y."/>
            <person name="Dong L."/>
            <person name="Ji J."/>
            <person name="Chen P."/>
            <person name="Wu S."/>
            <person name="Liu J."/>
            <person name="Xiao Y."/>
            <person name="Bu D."/>
            <person name="Tan J."/>
            <person name="Yang L."/>
            <person name="Ye C."/>
            <person name="Zhang J."/>
            <person name="Xu J."/>
            <person name="Zhou Y."/>
            <person name="Yu Y."/>
            <person name="Zhang B."/>
            <person name="Zhuang S."/>
            <person name="Wei H."/>
            <person name="Liu B."/>
            <person name="Lei M."/>
            <person name="Yu H."/>
            <person name="Li Y."/>
            <person name="Xu H."/>
            <person name="Wei S."/>
            <person name="He X."/>
            <person name="Fang L."/>
            <person name="Zhang Z."/>
            <person name="Zhang Y."/>
            <person name="Huang X."/>
            <person name="Su Z."/>
            <person name="Tong W."/>
            <person name="Li J."/>
            <person name="Tong Z."/>
            <person name="Li S."/>
            <person name="Ye J."/>
            <person name="Wang L."/>
            <person name="Fang L."/>
            <person name="Lei T."/>
            <person name="Chen C.-S."/>
            <person name="Chen H.-C."/>
            <person name="Xu Z."/>
            <person name="Li H."/>
            <person name="Huang H."/>
            <person name="Zhang F."/>
            <person name="Xu H."/>
            <person name="Li N."/>
            <person name="Zhao C."/>
            <person name="Li S."/>
            <person name="Dong L."/>
            <person name="Huang Y."/>
            <person name="Li L."/>
            <person name="Xi Y."/>
            <person name="Qi Q."/>
            <person name="Li W."/>
            <person name="Zhang B."/>
            <person name="Hu W."/>
            <person name="Zhang Y."/>
            <person name="Tian X."/>
            <person name="Jiao Y."/>
            <person name="Liang X."/>
            <person name="Jin J."/>
            <person name="Gao L."/>
            <person name="Zheng W."/>
            <person name="Hao B."/>
            <person name="Liu S.-M."/>
            <person name="Wang W."/>
            <person name="Yuan L."/>
            <person name="Cao M."/>
            <person name="McDermott J."/>
            <person name="Samudrala R."/>
            <person name="Wang J."/>
            <person name="Wong G.K.-S."/>
            <person name="Yang H."/>
        </authorList>
    </citation>
    <scope>NUCLEOTIDE SEQUENCE [LARGE SCALE GENOMIC DNA]</scope>
    <source>
        <strain>cv. 93-11</strain>
    </source>
</reference>
<reference key="2">
    <citation type="journal article" date="2008" name="Plant Mol. Biol.">
        <title>A genome-wide survey of HD-Zip genes in rice and analysis of drought-responsive family members.</title>
        <authorList>
            <person name="Agalou A."/>
            <person name="Purwantomo S."/>
            <person name="Oevernaes E."/>
            <person name="Johannesson H."/>
            <person name="Zhu X."/>
            <person name="Estiati A."/>
            <person name="de Kam R.J."/>
            <person name="Engstroem P."/>
            <person name="Slamet-Loedin I.H."/>
            <person name="Zhu Z."/>
            <person name="Wang M."/>
            <person name="Xiong L."/>
            <person name="Meijer A.H."/>
            <person name="Ouwerkerk P.B.F."/>
        </authorList>
    </citation>
    <scope>NUCLEOTIDE SEQUENCE [MRNA] OF 27-162</scope>
    <scope>TISSUE SPECIFICITY</scope>
    <scope>GENE FAMILY</scope>
    <scope>NOMENCLATURE</scope>
    <source>
        <strain>cv. Minghui 86</strain>
    </source>
</reference>
<sequence length="276" mass="28790">MVDGHLEASTRGFDVNRPPSSGGGGGAEEEQDDVAGAALSSSPNNSAGSFPMDDFSGHGLGGNDAAPGGGGGDRSCSRASDEDDGGSARKKLRLSKEQSAFLEESFKEHSTLNPKQKLALAKQLNLRPRQVEVWFQNRRARTKLKQTEVDCEYLKRCCETLTEENRRLQKELAELRALKTVHPFYMHLPATTLSMCPSCERVASNSAPATASSAATSSTAAPPAAPSSGGIAATSSSSAAAAAAPDHRPSSFAALFSSPRGFPLSVAPQAQPPTSS</sequence>
<dbReference type="EMBL" id="CM000134">
    <property type="protein sequence ID" value="EAZ09302.1"/>
    <property type="molecule type" value="Genomic_DNA"/>
</dbReference>
<dbReference type="EMBL" id="EF555532">
    <property type="protein sequence ID" value="ABQ57273.1"/>
    <property type="molecule type" value="mRNA"/>
</dbReference>
<dbReference type="SMR" id="A2Z1U1"/>
<dbReference type="STRING" id="39946.A2Z1U1"/>
<dbReference type="EnsemblPlants" id="BGIOSGA029665-TA">
    <property type="protein sequence ID" value="BGIOSGA029665-PA"/>
    <property type="gene ID" value="BGIOSGA029665"/>
</dbReference>
<dbReference type="Gramene" id="BGIOSGA029665-TA">
    <property type="protein sequence ID" value="BGIOSGA029665-PA"/>
    <property type="gene ID" value="BGIOSGA029665"/>
</dbReference>
<dbReference type="HOGENOM" id="CLU_049516_1_1_1"/>
<dbReference type="OMA" id="ICHAGRG"/>
<dbReference type="Proteomes" id="UP000007015">
    <property type="component" value="Chromosome 9"/>
</dbReference>
<dbReference type="GO" id="GO:0005634">
    <property type="term" value="C:nucleus"/>
    <property type="evidence" value="ECO:0007669"/>
    <property type="project" value="UniProtKB-SubCell"/>
</dbReference>
<dbReference type="GO" id="GO:0000981">
    <property type="term" value="F:DNA-binding transcription factor activity, RNA polymerase II-specific"/>
    <property type="evidence" value="ECO:0007669"/>
    <property type="project" value="InterPro"/>
</dbReference>
<dbReference type="GO" id="GO:0043565">
    <property type="term" value="F:sequence-specific DNA binding"/>
    <property type="evidence" value="ECO:0007669"/>
    <property type="project" value="InterPro"/>
</dbReference>
<dbReference type="CDD" id="cd00086">
    <property type="entry name" value="homeodomain"/>
    <property type="match status" value="1"/>
</dbReference>
<dbReference type="FunFam" id="1.10.10.60:FF:000577">
    <property type="entry name" value="Homeobox-leucine zipper protein 18"/>
    <property type="match status" value="1"/>
</dbReference>
<dbReference type="Gene3D" id="1.10.10.60">
    <property type="entry name" value="Homeodomain-like"/>
    <property type="match status" value="1"/>
</dbReference>
<dbReference type="InterPro" id="IPR001356">
    <property type="entry name" value="HD"/>
</dbReference>
<dbReference type="InterPro" id="IPR050762">
    <property type="entry name" value="HD-ZIP_Homeobox_LZ_Class_II"/>
</dbReference>
<dbReference type="InterPro" id="IPR017970">
    <property type="entry name" value="Homeobox_CS"/>
</dbReference>
<dbReference type="InterPro" id="IPR009057">
    <property type="entry name" value="Homeodomain-like_sf"/>
</dbReference>
<dbReference type="InterPro" id="IPR003106">
    <property type="entry name" value="Leu_zip_homeo"/>
</dbReference>
<dbReference type="PANTHER" id="PTHR45714">
    <property type="entry name" value="HOMEOBOX-LEUCINE ZIPPER PROTEIN HAT14"/>
    <property type="match status" value="1"/>
</dbReference>
<dbReference type="PANTHER" id="PTHR45714:SF39">
    <property type="entry name" value="HOMEOBOX-LEUCINE ZIPPER PROTEIN HAT14"/>
    <property type="match status" value="1"/>
</dbReference>
<dbReference type="Pfam" id="PF02183">
    <property type="entry name" value="HALZ"/>
    <property type="match status" value="1"/>
</dbReference>
<dbReference type="Pfam" id="PF00046">
    <property type="entry name" value="Homeodomain"/>
    <property type="match status" value="1"/>
</dbReference>
<dbReference type="SMART" id="SM00340">
    <property type="entry name" value="HALZ"/>
    <property type="match status" value="1"/>
</dbReference>
<dbReference type="SMART" id="SM00389">
    <property type="entry name" value="HOX"/>
    <property type="match status" value="1"/>
</dbReference>
<dbReference type="SUPFAM" id="SSF46689">
    <property type="entry name" value="Homeodomain-like"/>
    <property type="match status" value="1"/>
</dbReference>
<dbReference type="PROSITE" id="PS00027">
    <property type="entry name" value="HOMEOBOX_1"/>
    <property type="match status" value="1"/>
</dbReference>
<dbReference type="PROSITE" id="PS50071">
    <property type="entry name" value="HOMEOBOX_2"/>
    <property type="match status" value="1"/>
</dbReference>
<proteinExistence type="evidence at transcript level"/>
<organism>
    <name type="scientific">Oryza sativa subsp. indica</name>
    <name type="common">Rice</name>
    <dbReference type="NCBI Taxonomy" id="39946"/>
    <lineage>
        <taxon>Eukaryota</taxon>
        <taxon>Viridiplantae</taxon>
        <taxon>Streptophyta</taxon>
        <taxon>Embryophyta</taxon>
        <taxon>Tracheophyta</taxon>
        <taxon>Spermatophyta</taxon>
        <taxon>Magnoliopsida</taxon>
        <taxon>Liliopsida</taxon>
        <taxon>Poales</taxon>
        <taxon>Poaceae</taxon>
        <taxon>BOP clade</taxon>
        <taxon>Oryzoideae</taxon>
        <taxon>Oryzeae</taxon>
        <taxon>Oryzinae</taxon>
        <taxon>Oryza</taxon>
        <taxon>Oryza sativa</taxon>
    </lineage>
</organism>